<organism>
    <name type="scientific">Drosophila simulans</name>
    <name type="common">Fruit fly</name>
    <dbReference type="NCBI Taxonomy" id="7240"/>
    <lineage>
        <taxon>Eukaryota</taxon>
        <taxon>Metazoa</taxon>
        <taxon>Ecdysozoa</taxon>
        <taxon>Arthropoda</taxon>
        <taxon>Hexapoda</taxon>
        <taxon>Insecta</taxon>
        <taxon>Pterygota</taxon>
        <taxon>Neoptera</taxon>
        <taxon>Endopterygota</taxon>
        <taxon>Diptera</taxon>
        <taxon>Brachycera</taxon>
        <taxon>Muscomorpha</taxon>
        <taxon>Ephydroidea</taxon>
        <taxon>Drosophilidae</taxon>
        <taxon>Drosophila</taxon>
        <taxon>Sophophora</taxon>
    </lineage>
</organism>
<dbReference type="EMBL" id="CM000362">
    <property type="protein sequence ID" value="EDX06153.1"/>
    <property type="molecule type" value="Genomic_DNA"/>
</dbReference>
<dbReference type="SMR" id="B4QFP7"/>
<dbReference type="STRING" id="7240.B4QFP7"/>
<dbReference type="EnsemblMetazoa" id="FBtr0210088">
    <property type="protein sequence ID" value="FBpp0208580"/>
    <property type="gene ID" value="FBgn0181953"/>
</dbReference>
<dbReference type="EnsemblMetazoa" id="XM_002080532.4">
    <property type="protein sequence ID" value="XP_002080568.1"/>
    <property type="gene ID" value="LOC6733513"/>
</dbReference>
<dbReference type="GeneID" id="6733513"/>
<dbReference type="HOGENOM" id="CLU_103054_0_1_1"/>
<dbReference type="OMA" id="YGKPQNP"/>
<dbReference type="OrthoDB" id="284292at2759"/>
<dbReference type="PhylomeDB" id="B4QFP7"/>
<dbReference type="Proteomes" id="UP000000304">
    <property type="component" value="Chromosome 2R"/>
</dbReference>
<dbReference type="Bgee" id="FBgn0181953">
    <property type="expression patterns" value="Expressed in adult organism and 3 other cell types or tissues"/>
</dbReference>
<dbReference type="GO" id="GO:0005759">
    <property type="term" value="C:mitochondrial matrix"/>
    <property type="evidence" value="ECO:0007669"/>
    <property type="project" value="UniProtKB-SubCell"/>
</dbReference>
<dbReference type="GO" id="GO:0005739">
    <property type="term" value="C:mitochondrion"/>
    <property type="evidence" value="ECO:0000250"/>
    <property type="project" value="UniProtKB"/>
</dbReference>
<dbReference type="GO" id="GO:0055070">
    <property type="term" value="P:copper ion homeostasis"/>
    <property type="evidence" value="ECO:0007669"/>
    <property type="project" value="EnsemblMetazoa"/>
</dbReference>
<dbReference type="GO" id="GO:0006121">
    <property type="term" value="P:mitochondrial electron transport, succinate to ubiquinone"/>
    <property type="evidence" value="ECO:0000250"/>
    <property type="project" value="UniProtKB"/>
</dbReference>
<dbReference type="GO" id="GO:0034553">
    <property type="term" value="P:mitochondrial respiratory chain complex II assembly"/>
    <property type="evidence" value="ECO:0007669"/>
    <property type="project" value="TreeGrafter"/>
</dbReference>
<dbReference type="GO" id="GO:0018293">
    <property type="term" value="P:protein-FAD linkage"/>
    <property type="evidence" value="ECO:0000250"/>
    <property type="project" value="UniProtKB"/>
</dbReference>
<dbReference type="GO" id="GO:0006099">
    <property type="term" value="P:tricarboxylic acid cycle"/>
    <property type="evidence" value="ECO:0007669"/>
    <property type="project" value="TreeGrafter"/>
</dbReference>
<dbReference type="FunFam" id="1.10.150.250:FF:000002">
    <property type="entry name" value="Succinate dehydrogenase assembly factor 2, mitochondrial"/>
    <property type="match status" value="1"/>
</dbReference>
<dbReference type="Gene3D" id="1.10.150.250">
    <property type="entry name" value="Flavinator of succinate dehydrogenase"/>
    <property type="match status" value="1"/>
</dbReference>
<dbReference type="HAMAP" id="MF_03057">
    <property type="entry name" value="SDHAF2"/>
    <property type="match status" value="1"/>
</dbReference>
<dbReference type="InterPro" id="IPR005631">
    <property type="entry name" value="SDH"/>
</dbReference>
<dbReference type="InterPro" id="IPR036714">
    <property type="entry name" value="SDH_sf"/>
</dbReference>
<dbReference type="InterPro" id="IPR028882">
    <property type="entry name" value="SDHAF2"/>
</dbReference>
<dbReference type="PANTHER" id="PTHR12469">
    <property type="entry name" value="PROTEIN EMI5 HOMOLOG, MITOCHONDRIAL"/>
    <property type="match status" value="1"/>
</dbReference>
<dbReference type="PANTHER" id="PTHR12469:SF2">
    <property type="entry name" value="SUCCINATE DEHYDROGENASE ASSEMBLY FACTOR 2, MITOCHONDRIAL"/>
    <property type="match status" value="1"/>
</dbReference>
<dbReference type="Pfam" id="PF03937">
    <property type="entry name" value="Sdh5"/>
    <property type="match status" value="1"/>
</dbReference>
<dbReference type="SUPFAM" id="SSF109910">
    <property type="entry name" value="YgfY-like"/>
    <property type="match status" value="1"/>
</dbReference>
<comment type="function">
    <text evidence="1">Plays an essential role in the assembly of succinate dehydrogenase (SDH), an enzyme complex (also referred to as respiratory complex II) that is a component of both the tricarboxylic acid (TCA) cycle and the mitochondrial electron transport chain, and which couples the oxidation of succinate to fumarate with the reduction of ubiquinone (coenzyme Q) to ubiquinol. Required for flavinylation (covalent attachment of FAD) of the flavoprotein subunit of the SDH catalytic dimer.</text>
</comment>
<comment type="subunit">
    <text evidence="1">Interacts with the flavoprotein subunit within the SDH catalytic dimer.</text>
</comment>
<comment type="subcellular location">
    <subcellularLocation>
        <location evidence="1">Mitochondrion matrix</location>
    </subcellularLocation>
</comment>
<comment type="similarity">
    <text evidence="1">Belongs to the SDHAF2 family.</text>
</comment>
<protein>
    <recommendedName>
        <fullName evidence="1">Succinate dehydrogenase assembly factor 2-A, mitochondrial</fullName>
        <shortName evidence="1">SDH assembly factor 2-A</shortName>
        <shortName evidence="1">SDHAF2-A</shortName>
    </recommendedName>
</protein>
<sequence length="163" mass="19153">MLRQLRLTMDISGWIFLPWRRSMSNMKDSPPPPPPLASTFDDVIVDYEDPDYLPLPEYPVRPNEPLETRKQRLLYQSRKRGMLENDLLLSTFAAKHLQNFSAEQTAQYDQLINGVSNDWDIYYWATEVKPTPKEYDTEIMGLLKEHVKNAERVTRLRQPDLNA</sequence>
<accession>B4QFP7</accession>
<keyword id="KW-0143">Chaperone</keyword>
<keyword id="KW-0496">Mitochondrion</keyword>
<keyword id="KW-1185">Reference proteome</keyword>
<keyword id="KW-0809">Transit peptide</keyword>
<proteinExistence type="inferred from homology"/>
<reference key="1">
    <citation type="journal article" date="2007" name="Nature">
        <title>Evolution of genes and genomes on the Drosophila phylogeny.</title>
        <authorList>
            <consortium name="Drosophila 12 genomes consortium"/>
        </authorList>
    </citation>
    <scope>NUCLEOTIDE SEQUENCE [LARGE SCALE GENOMIC DNA]</scope>
</reference>
<feature type="transit peptide" description="Mitochondrion" evidence="1">
    <location>
        <begin position="1"/>
        <end position="23"/>
    </location>
</feature>
<feature type="chain" id="PRO_0000383177" description="Succinate dehydrogenase assembly factor 2-A, mitochondrial">
    <location>
        <begin position="24"/>
        <end position="163"/>
    </location>
</feature>
<evidence type="ECO:0000255" key="1">
    <source>
        <dbReference type="HAMAP-Rule" id="MF_03057"/>
    </source>
</evidence>
<gene>
    <name type="ORF">GD10178</name>
</gene>
<name>SDF2A_DROSI</name>